<name>HFLX_THEPD</name>
<evidence type="ECO:0000255" key="1">
    <source>
        <dbReference type="HAMAP-Rule" id="MF_00900"/>
    </source>
</evidence>
<accession>A1RY30</accession>
<proteinExistence type="inferred from homology"/>
<comment type="function">
    <text evidence="1">GTPase that associates with the 50S ribosomal subunit and may have a role during protein synthesis or ribosome biogenesis.</text>
</comment>
<comment type="cofactor">
    <cofactor evidence="1">
        <name>Mg(2+)</name>
        <dbReference type="ChEBI" id="CHEBI:18420"/>
    </cofactor>
</comment>
<comment type="subunit">
    <text evidence="1">Monomer. Associates with the 50S ribosomal subunit.</text>
</comment>
<comment type="subcellular location">
    <subcellularLocation>
        <location evidence="1">Cytoplasm</location>
    </subcellularLocation>
    <text evidence="1">May associate with membranes.</text>
</comment>
<comment type="similarity">
    <text evidence="1">Belongs to the TRAFAC class OBG-HflX-like GTPase superfamily. HflX GTPase family.</text>
</comment>
<feature type="chain" id="PRO_0000412668" description="GTPase HflX">
    <location>
        <begin position="1"/>
        <end position="424"/>
    </location>
</feature>
<feature type="domain" description="Hflx-type G" evidence="1">
    <location>
        <begin position="194"/>
        <end position="364"/>
    </location>
</feature>
<feature type="binding site" evidence="1">
    <location>
        <begin position="200"/>
        <end position="207"/>
    </location>
    <ligand>
        <name>GTP</name>
        <dbReference type="ChEBI" id="CHEBI:37565"/>
    </ligand>
</feature>
<feature type="binding site" evidence="1">
    <location>
        <position position="207"/>
    </location>
    <ligand>
        <name>Mg(2+)</name>
        <dbReference type="ChEBI" id="CHEBI:18420"/>
    </ligand>
</feature>
<feature type="binding site" evidence="1">
    <location>
        <begin position="225"/>
        <end position="229"/>
    </location>
    <ligand>
        <name>GTP</name>
        <dbReference type="ChEBI" id="CHEBI:37565"/>
    </ligand>
</feature>
<feature type="binding site" evidence="1">
    <location>
        <position position="227"/>
    </location>
    <ligand>
        <name>Mg(2+)</name>
        <dbReference type="ChEBI" id="CHEBI:18420"/>
    </ligand>
</feature>
<feature type="binding site" evidence="1">
    <location>
        <begin position="246"/>
        <end position="249"/>
    </location>
    <ligand>
        <name>GTP</name>
        <dbReference type="ChEBI" id="CHEBI:37565"/>
    </ligand>
</feature>
<feature type="binding site" evidence="1">
    <location>
        <begin position="314"/>
        <end position="317"/>
    </location>
    <ligand>
        <name>GTP</name>
        <dbReference type="ChEBI" id="CHEBI:37565"/>
    </ligand>
</feature>
<feature type="binding site" evidence="1">
    <location>
        <begin position="342"/>
        <end position="344"/>
    </location>
    <ligand>
        <name>GTP</name>
        <dbReference type="ChEBI" id="CHEBI:37565"/>
    </ligand>
</feature>
<gene>
    <name evidence="1" type="primary">hflX</name>
    <name type="ordered locus">Tpen_0708</name>
</gene>
<keyword id="KW-0963">Cytoplasm</keyword>
<keyword id="KW-0342">GTP-binding</keyword>
<keyword id="KW-0460">Magnesium</keyword>
<keyword id="KW-0479">Metal-binding</keyword>
<keyword id="KW-0547">Nucleotide-binding</keyword>
<keyword id="KW-1185">Reference proteome</keyword>
<organism>
    <name type="scientific">Thermofilum pendens (strain DSM 2475 / Hrk 5)</name>
    <dbReference type="NCBI Taxonomy" id="368408"/>
    <lineage>
        <taxon>Archaea</taxon>
        <taxon>Thermoproteota</taxon>
        <taxon>Thermoprotei</taxon>
        <taxon>Thermofilales</taxon>
        <taxon>Thermofilaceae</taxon>
        <taxon>Thermofilum</taxon>
    </lineage>
</organism>
<sequence>MSVDGRQAVIVVARLSGKGDLALLDELRKLVEAAGYAVAGELLQKSRYEDPKYNIGRGKVLELKRLVEEKKPLKVVFLNDLKPNQAYNLSKETGVEVIDRYELILEIFAKRAGSRESKLQIELAKLKRELSFAKEYINLAKRGELHGFLGGGKYAVDAYYAYVSMRISKIEEELRKIRKMKEERIARRVEAGLYTVALTGYTGAGKTTLFNVLTGENGYIDGKPFATLSTLSRRTYFHGFPVLVTDTIGFIDDLPDALVDAFYTTLRETLAADVILLVLDVSDTPAEIRRKLTASMEVLLNLGVPPTRILLVGNKIDKVSSAELEERERLLEDSGLRYTLISAARRIGIHELTQAVVEMLPEKVSATLALTREALAEDLRELLDRCRVREVVQGSDGKLLVVVEGRRDIVARLQARAGMGLVDG</sequence>
<protein>
    <recommendedName>
        <fullName evidence="1">GTPase HflX</fullName>
    </recommendedName>
    <alternativeName>
        <fullName evidence="1">GTP-binding protein HflX</fullName>
    </alternativeName>
</protein>
<dbReference type="EMBL" id="CP000505">
    <property type="protein sequence ID" value="ABL78110.1"/>
    <property type="molecule type" value="Genomic_DNA"/>
</dbReference>
<dbReference type="RefSeq" id="WP_011752375.1">
    <property type="nucleotide sequence ID" value="NC_008698.1"/>
</dbReference>
<dbReference type="SMR" id="A1RY30"/>
<dbReference type="STRING" id="368408.Tpen_0708"/>
<dbReference type="EnsemblBacteria" id="ABL78110">
    <property type="protein sequence ID" value="ABL78110"/>
    <property type="gene ID" value="Tpen_0708"/>
</dbReference>
<dbReference type="GeneID" id="4601589"/>
<dbReference type="KEGG" id="tpe:Tpen_0708"/>
<dbReference type="eggNOG" id="arCOG00353">
    <property type="taxonomic scope" value="Archaea"/>
</dbReference>
<dbReference type="HOGENOM" id="CLU_019597_2_0_2"/>
<dbReference type="OrthoDB" id="10150at2157"/>
<dbReference type="Proteomes" id="UP000000641">
    <property type="component" value="Chromosome"/>
</dbReference>
<dbReference type="GO" id="GO:0005737">
    <property type="term" value="C:cytoplasm"/>
    <property type="evidence" value="ECO:0007669"/>
    <property type="project" value="UniProtKB-SubCell"/>
</dbReference>
<dbReference type="GO" id="GO:0005525">
    <property type="term" value="F:GTP binding"/>
    <property type="evidence" value="ECO:0007669"/>
    <property type="project" value="UniProtKB-UniRule"/>
</dbReference>
<dbReference type="GO" id="GO:0003924">
    <property type="term" value="F:GTPase activity"/>
    <property type="evidence" value="ECO:0007669"/>
    <property type="project" value="UniProtKB-UniRule"/>
</dbReference>
<dbReference type="GO" id="GO:0046872">
    <property type="term" value="F:metal ion binding"/>
    <property type="evidence" value="ECO:0007669"/>
    <property type="project" value="UniProtKB-KW"/>
</dbReference>
<dbReference type="GO" id="GO:0043022">
    <property type="term" value="F:ribosome binding"/>
    <property type="evidence" value="ECO:0007669"/>
    <property type="project" value="TreeGrafter"/>
</dbReference>
<dbReference type="CDD" id="cd01878">
    <property type="entry name" value="HflX"/>
    <property type="match status" value="1"/>
</dbReference>
<dbReference type="Gene3D" id="6.10.250.2860">
    <property type="match status" value="1"/>
</dbReference>
<dbReference type="Gene3D" id="3.40.50.11060">
    <property type="entry name" value="GTPase HflX, N-terminal domain"/>
    <property type="match status" value="1"/>
</dbReference>
<dbReference type="Gene3D" id="3.40.50.300">
    <property type="entry name" value="P-loop containing nucleotide triphosphate hydrolases"/>
    <property type="match status" value="1"/>
</dbReference>
<dbReference type="HAMAP" id="MF_00900">
    <property type="entry name" value="GTPase_HflX"/>
    <property type="match status" value="1"/>
</dbReference>
<dbReference type="InterPro" id="IPR030394">
    <property type="entry name" value="G_HFLX_dom"/>
</dbReference>
<dbReference type="InterPro" id="IPR006073">
    <property type="entry name" value="GTP-bd"/>
</dbReference>
<dbReference type="InterPro" id="IPR032305">
    <property type="entry name" value="GTP-bd_M"/>
</dbReference>
<dbReference type="InterPro" id="IPR016496">
    <property type="entry name" value="GTPase_HflX"/>
</dbReference>
<dbReference type="InterPro" id="IPR025121">
    <property type="entry name" value="GTPase_HflX_N"/>
</dbReference>
<dbReference type="InterPro" id="IPR042108">
    <property type="entry name" value="GTPase_HflX_N_sf"/>
</dbReference>
<dbReference type="InterPro" id="IPR027417">
    <property type="entry name" value="P-loop_NTPase"/>
</dbReference>
<dbReference type="NCBIfam" id="TIGR03156">
    <property type="entry name" value="GTP_HflX"/>
    <property type="match status" value="1"/>
</dbReference>
<dbReference type="PANTHER" id="PTHR10229">
    <property type="entry name" value="GTP-BINDING PROTEIN HFLX"/>
    <property type="match status" value="1"/>
</dbReference>
<dbReference type="PANTHER" id="PTHR10229:SF8">
    <property type="entry name" value="GTPASE HFLX"/>
    <property type="match status" value="1"/>
</dbReference>
<dbReference type="Pfam" id="PF16360">
    <property type="entry name" value="GTP-bdg_M"/>
    <property type="match status" value="1"/>
</dbReference>
<dbReference type="Pfam" id="PF13167">
    <property type="entry name" value="GTP-bdg_N"/>
    <property type="match status" value="1"/>
</dbReference>
<dbReference type="Pfam" id="PF01926">
    <property type="entry name" value="MMR_HSR1"/>
    <property type="match status" value="1"/>
</dbReference>
<dbReference type="PIRSF" id="PIRSF006809">
    <property type="entry name" value="GTP-binding_hflX_prd"/>
    <property type="match status" value="1"/>
</dbReference>
<dbReference type="SUPFAM" id="SSF52540">
    <property type="entry name" value="P-loop containing nucleoside triphosphate hydrolases"/>
    <property type="match status" value="1"/>
</dbReference>
<dbReference type="PROSITE" id="PS51705">
    <property type="entry name" value="G_HFLX"/>
    <property type="match status" value="1"/>
</dbReference>
<reference key="1">
    <citation type="journal article" date="2008" name="J. Bacteriol.">
        <title>Genome sequence of Thermofilum pendens reveals an exceptional loss of biosynthetic pathways without genome reduction.</title>
        <authorList>
            <person name="Anderson I."/>
            <person name="Rodriguez J."/>
            <person name="Susanti D."/>
            <person name="Porat I."/>
            <person name="Reich C."/>
            <person name="Ulrich L.E."/>
            <person name="Elkins J.G."/>
            <person name="Mavromatis K."/>
            <person name="Lykidis A."/>
            <person name="Kim E."/>
            <person name="Thompson L.S."/>
            <person name="Nolan M."/>
            <person name="Land M."/>
            <person name="Copeland A."/>
            <person name="Lapidus A."/>
            <person name="Lucas S."/>
            <person name="Detter C."/>
            <person name="Zhulin I.B."/>
            <person name="Olsen G.J."/>
            <person name="Whitman W."/>
            <person name="Mukhopadhyay B."/>
            <person name="Bristow J."/>
            <person name="Kyrpides N."/>
        </authorList>
    </citation>
    <scope>NUCLEOTIDE SEQUENCE [LARGE SCALE GENOMIC DNA]</scope>
    <source>
        <strain>DSM 2475 / Hrk 5</strain>
    </source>
</reference>